<name>PURP_PYRHO</name>
<protein>
    <recommendedName>
        <fullName evidence="2">5-formaminoimidazole-4-carboxamide-1-(beta)-D-ribofuranosyl 5'-monophosphate synthetase</fullName>
        <ecNumber evidence="2">6.3.4.23</ecNumber>
    </recommendedName>
    <alternativeName>
        <fullName evidence="2">5-aminoimidazole-4-carboxamide-1-beta-D-ribofuranosyl 5'-monophosphate--formate ligase</fullName>
    </alternativeName>
</protein>
<keyword id="KW-0067">ATP-binding</keyword>
<keyword id="KW-0436">Ligase</keyword>
<keyword id="KW-0460">Magnesium</keyword>
<keyword id="KW-0464">Manganese</keyword>
<keyword id="KW-0479">Metal-binding</keyword>
<keyword id="KW-0547">Nucleotide-binding</keyword>
<keyword id="KW-0658">Purine biosynthesis</keyword>
<comment type="function">
    <text evidence="2">Catalyzes the ATP- and formate-dependent formylation of 5-aminoimidazole-4-carboxamide-1-beta-d-ribofuranosyl 5'-monophosphate (AICAR) to 5-formaminoimidazole-4-carboxamide-1-beta-d-ribofuranosyl 5'-monophosphate (FAICAR) in the absence of folates.</text>
</comment>
<comment type="catalytic activity">
    <reaction evidence="2">
        <text>5-amino-1-(5-phospho-beta-D-ribosyl)imidazole-4-carboxamide + formate + ATP = 5-formamido-1-(5-phospho-D-ribosyl)imidazole-4-carboxamide + ADP + phosphate</text>
        <dbReference type="Rhea" id="RHEA:24836"/>
        <dbReference type="ChEBI" id="CHEBI:15740"/>
        <dbReference type="ChEBI" id="CHEBI:30616"/>
        <dbReference type="ChEBI" id="CHEBI:43474"/>
        <dbReference type="ChEBI" id="CHEBI:58467"/>
        <dbReference type="ChEBI" id="CHEBI:58475"/>
        <dbReference type="ChEBI" id="CHEBI:456216"/>
        <dbReference type="EC" id="6.3.4.23"/>
    </reaction>
</comment>
<comment type="cofactor">
    <cofactor evidence="1">
        <name>Mg(2+)</name>
        <dbReference type="ChEBI" id="CHEBI:18420"/>
    </cofactor>
    <cofactor evidence="1">
        <name>Mn(2+)</name>
        <dbReference type="ChEBI" id="CHEBI:29035"/>
    </cofactor>
    <text evidence="1">Binds 1 Mg(2+) or Mn(2+) ion per subunit.</text>
</comment>
<comment type="pathway">
    <text evidence="2">Purine metabolism; IMP biosynthesis via de novo pathway; 5-formamido-1-(5-phospho-D-ribosyl)imidazole-4-carboxamide from 5-amino-1-(5-phospho-D-ribosyl)imidazole-4-carboxamide (formate route): step 1/1.</text>
</comment>
<comment type="similarity">
    <text evidence="2">Belongs to the phosphohexose mutase family.</text>
</comment>
<accession>O59073</accession>
<dbReference type="EC" id="6.3.4.23" evidence="2"/>
<dbReference type="EMBL" id="BA000001">
    <property type="protein sequence ID" value="BAA30454.1"/>
    <property type="molecule type" value="Genomic_DNA"/>
</dbReference>
<dbReference type="PIR" id="F71006">
    <property type="entry name" value="F71006"/>
</dbReference>
<dbReference type="RefSeq" id="WP_010885437.1">
    <property type="nucleotide sequence ID" value="NC_000961.1"/>
</dbReference>
<dbReference type="SMR" id="O59073"/>
<dbReference type="STRING" id="70601.gene:9378324"/>
<dbReference type="EnsemblBacteria" id="BAA30454">
    <property type="protein sequence ID" value="BAA30454"/>
    <property type="gene ID" value="BAA30454"/>
</dbReference>
<dbReference type="GeneID" id="1443674"/>
<dbReference type="KEGG" id="pho:PH1348"/>
<dbReference type="eggNOG" id="arCOG04346">
    <property type="taxonomic scope" value="Archaea"/>
</dbReference>
<dbReference type="OrthoDB" id="98133at2157"/>
<dbReference type="UniPathway" id="UPA00074">
    <property type="reaction ID" value="UER00134"/>
</dbReference>
<dbReference type="Proteomes" id="UP000000752">
    <property type="component" value="Chromosome"/>
</dbReference>
<dbReference type="GO" id="GO:0005524">
    <property type="term" value="F:ATP binding"/>
    <property type="evidence" value="ECO:0007669"/>
    <property type="project" value="UniProtKB-KW"/>
</dbReference>
<dbReference type="GO" id="GO:0016879">
    <property type="term" value="F:ligase activity, forming carbon-nitrogen bonds"/>
    <property type="evidence" value="ECO:0007669"/>
    <property type="project" value="UniProtKB-UniRule"/>
</dbReference>
<dbReference type="GO" id="GO:0000287">
    <property type="term" value="F:magnesium ion binding"/>
    <property type="evidence" value="ECO:0007669"/>
    <property type="project" value="InterPro"/>
</dbReference>
<dbReference type="GO" id="GO:0006189">
    <property type="term" value="P:'de novo' IMP biosynthetic process"/>
    <property type="evidence" value="ECO:0007669"/>
    <property type="project" value="UniProtKB-UniRule"/>
</dbReference>
<dbReference type="Gene3D" id="3.40.50.20">
    <property type="match status" value="1"/>
</dbReference>
<dbReference type="Gene3D" id="3.30.1490.20">
    <property type="entry name" value="ATP-grasp fold, A domain"/>
    <property type="match status" value="1"/>
</dbReference>
<dbReference type="Gene3D" id="3.30.470.20">
    <property type="entry name" value="ATP-grasp fold, B domain"/>
    <property type="match status" value="1"/>
</dbReference>
<dbReference type="HAMAP" id="MF_01163">
    <property type="entry name" value="IMP_biosynth_PurP"/>
    <property type="match status" value="1"/>
</dbReference>
<dbReference type="InterPro" id="IPR011761">
    <property type="entry name" value="ATP-grasp"/>
</dbReference>
<dbReference type="InterPro" id="IPR013815">
    <property type="entry name" value="ATP_grasp_subdomain_1"/>
</dbReference>
<dbReference type="InterPro" id="IPR023656">
    <property type="entry name" value="IMP_biosynth_PurP"/>
</dbReference>
<dbReference type="InterPro" id="IPR009720">
    <property type="entry name" value="IMP_biosynth_PurP_C"/>
</dbReference>
<dbReference type="InterPro" id="IPR010672">
    <property type="entry name" value="IMP_biosynth_PurP_N"/>
</dbReference>
<dbReference type="InterPro" id="IPR016185">
    <property type="entry name" value="PreATP-grasp_dom_sf"/>
</dbReference>
<dbReference type="NCBIfam" id="NF009779">
    <property type="entry name" value="PRK13278.1-3"/>
    <property type="match status" value="1"/>
</dbReference>
<dbReference type="PANTHER" id="PTHR38147:SF2">
    <property type="entry name" value="5-FORMAMINOIMIDAZOLE-4-CARBOXAMIDE-1-(BETA)-D-RIBOFURANOSYL 5'-MONOPHOSPHATE SYNTHETASE"/>
    <property type="match status" value="1"/>
</dbReference>
<dbReference type="PANTHER" id="PTHR38147">
    <property type="entry name" value="5-FORMAMINOIMIDAZOLE-4-CARBOXAMIDE-1-(BETA)-D-RIBOFURANOSYL 5'-MONOPHOSPHATE SYNTHETASE-RELATED"/>
    <property type="match status" value="1"/>
</dbReference>
<dbReference type="Pfam" id="PF06849">
    <property type="entry name" value="DUF1246"/>
    <property type="match status" value="1"/>
</dbReference>
<dbReference type="Pfam" id="PF06973">
    <property type="entry name" value="DUF1297"/>
    <property type="match status" value="1"/>
</dbReference>
<dbReference type="PIRSF" id="PIRSF004602">
    <property type="entry name" value="ATPgrasp_PurP"/>
    <property type="match status" value="1"/>
</dbReference>
<dbReference type="SUPFAM" id="SSF56059">
    <property type="entry name" value="Glutathione synthetase ATP-binding domain-like"/>
    <property type="match status" value="1"/>
</dbReference>
<dbReference type="SUPFAM" id="SSF52440">
    <property type="entry name" value="PreATP-grasp domain"/>
    <property type="match status" value="1"/>
</dbReference>
<dbReference type="PROSITE" id="PS50975">
    <property type="entry name" value="ATP_GRASP"/>
    <property type="match status" value="1"/>
</dbReference>
<organism>
    <name type="scientific">Pyrococcus horikoshii (strain ATCC 700860 / DSM 12428 / JCM 9974 / NBRC 100139 / OT-3)</name>
    <dbReference type="NCBI Taxonomy" id="70601"/>
    <lineage>
        <taxon>Archaea</taxon>
        <taxon>Methanobacteriati</taxon>
        <taxon>Methanobacteriota</taxon>
        <taxon>Thermococci</taxon>
        <taxon>Thermococcales</taxon>
        <taxon>Thermococcaceae</taxon>
        <taxon>Pyrococcus</taxon>
    </lineage>
</organism>
<reference key="1">
    <citation type="journal article" date="1998" name="DNA Res.">
        <title>Complete sequence and gene organization of the genome of a hyper-thermophilic archaebacterium, Pyrococcus horikoshii OT3.</title>
        <authorList>
            <person name="Kawarabayasi Y."/>
            <person name="Sawada M."/>
            <person name="Horikawa H."/>
            <person name="Haikawa Y."/>
            <person name="Hino Y."/>
            <person name="Yamamoto S."/>
            <person name="Sekine M."/>
            <person name="Baba S."/>
            <person name="Kosugi H."/>
            <person name="Hosoyama A."/>
            <person name="Nagai Y."/>
            <person name="Sakai M."/>
            <person name="Ogura K."/>
            <person name="Otsuka R."/>
            <person name="Nakazawa H."/>
            <person name="Takamiya M."/>
            <person name="Ohfuku Y."/>
            <person name="Funahashi T."/>
            <person name="Tanaka T."/>
            <person name="Kudoh Y."/>
            <person name="Yamazaki J."/>
            <person name="Kushida N."/>
            <person name="Oguchi A."/>
            <person name="Aoki K."/>
            <person name="Yoshizawa T."/>
            <person name="Nakamura Y."/>
            <person name="Robb F.T."/>
            <person name="Horikoshi K."/>
            <person name="Masuchi Y."/>
            <person name="Shizuya H."/>
            <person name="Kikuchi H."/>
        </authorList>
    </citation>
    <scope>NUCLEOTIDE SEQUENCE [LARGE SCALE GENOMIC DNA]</scope>
    <source>
        <strain>ATCC 700860 / DSM 12428 / JCM 9974 / NBRC 100139 / OT-3</strain>
    </source>
</reference>
<evidence type="ECO:0000250" key="1"/>
<evidence type="ECO:0000255" key="2">
    <source>
        <dbReference type="HAMAP-Rule" id="MF_01163"/>
    </source>
</evidence>
<gene>
    <name evidence="2" type="primary">purP</name>
    <name type="ordered locus">PH1348</name>
</gene>
<sequence length="333" mass="37874">MVRIATYASHSALQILKGAKDEGFGTIAFGKPRVKLLYTKYFPVADYFLEGDYPEDKLLELDAVVIPTGSFIAHLGVELVEKMRVPYFGNKEVLKWESDRSLERKWLEKAKLTLPRIYEDPDDIDRPVIVKPHGAKGGRGYFIAKSSKDFWEKAEKFLGIRSKEDLKNVQIQEYVVGVPIYPHYFYSKITGELELMSIDRRYESNVDAIGRIPSREQLDLDLDVTYTVVGNIPLVLRESLLMDVIEAGERVVKASEELMGGLWGPFCLEGVFTPDMEFVVFEISARIVAGTNLFINGSPYTWLKYDEPMSTGRRIAREIKIAIEEGKLEEVVT</sequence>
<proteinExistence type="inferred from homology"/>
<feature type="chain" id="PRO_0000348637" description="5-formaminoimidazole-4-carboxamide-1-(beta)-D-ribofuranosyl 5'-monophosphate synthetase">
    <location>
        <begin position="1"/>
        <end position="333"/>
    </location>
</feature>
<feature type="domain" description="ATP-grasp" evidence="2">
    <location>
        <begin position="91"/>
        <end position="324"/>
    </location>
</feature>
<feature type="binding site" evidence="2">
    <location>
        <position position="10"/>
    </location>
    <ligand>
        <name>5-amino-1-(5-phospho-beta-D-ribosyl)imidazole-4-carboxamide</name>
        <dbReference type="ChEBI" id="CHEBI:58475"/>
    </ligand>
</feature>
<feature type="binding site" evidence="2">
    <location>
        <position position="70"/>
    </location>
    <ligand>
        <name>5-amino-1-(5-phospho-beta-D-ribosyl)imidazole-4-carboxamide</name>
        <dbReference type="ChEBI" id="CHEBI:58475"/>
    </ligand>
</feature>
<feature type="binding site" evidence="2">
    <location>
        <begin position="121"/>
        <end position="181"/>
    </location>
    <ligand>
        <name>ATP</name>
        <dbReference type="ChEBI" id="CHEBI:30616"/>
    </ligand>
</feature>
<feature type="binding site" evidence="2">
    <location>
        <position position="203"/>
    </location>
    <ligand>
        <name>ATP</name>
        <dbReference type="ChEBI" id="CHEBI:30616"/>
    </ligand>
</feature>
<feature type="binding site" evidence="2">
    <location>
        <position position="231"/>
    </location>
    <ligand>
        <name>5-amino-1-(5-phospho-beta-D-ribosyl)imidazole-4-carboxamide</name>
        <dbReference type="ChEBI" id="CHEBI:58475"/>
    </ligand>
</feature>
<feature type="binding site" evidence="2">
    <location>
        <position position="269"/>
    </location>
    <ligand>
        <name>Mg(2+)</name>
        <dbReference type="ChEBI" id="CHEBI:18420"/>
    </ligand>
</feature>
<feature type="binding site" evidence="2">
    <location>
        <position position="282"/>
    </location>
    <ligand>
        <name>Mg(2+)</name>
        <dbReference type="ChEBI" id="CHEBI:18420"/>
    </ligand>
</feature>